<protein>
    <recommendedName>
        <fullName evidence="1">GTPase Obg</fullName>
        <ecNumber evidence="1">3.6.5.-</ecNumber>
    </recommendedName>
    <alternativeName>
        <fullName evidence="1">GTP-binding protein Obg</fullName>
    </alternativeName>
</protein>
<accession>B1H0I4</accession>
<evidence type="ECO:0000255" key="1">
    <source>
        <dbReference type="HAMAP-Rule" id="MF_01454"/>
    </source>
</evidence>
<evidence type="ECO:0000255" key="2">
    <source>
        <dbReference type="PROSITE-ProRule" id="PRU01229"/>
    </source>
</evidence>
<evidence type="ECO:0000255" key="3">
    <source>
        <dbReference type="PROSITE-ProRule" id="PRU01231"/>
    </source>
</evidence>
<name>OBG_ENDTX</name>
<reference key="1">
    <citation type="journal article" date="2008" name="Proc. Natl. Acad. Sci. U.S.A.">
        <title>Complete genome of the uncultured termite group 1 bacteria in a single host protist cell.</title>
        <authorList>
            <person name="Hongoh Y."/>
            <person name="Sharma V.K."/>
            <person name="Prakash T."/>
            <person name="Noda S."/>
            <person name="Taylor T.D."/>
            <person name="Kudo T."/>
            <person name="Sakaki Y."/>
            <person name="Toyoda A."/>
            <person name="Hattori M."/>
            <person name="Ohkuma M."/>
        </authorList>
    </citation>
    <scope>NUCLEOTIDE SEQUENCE [LARGE SCALE GENOMIC DNA]</scope>
</reference>
<feature type="chain" id="PRO_0000386371" description="GTPase Obg">
    <location>
        <begin position="1"/>
        <end position="419"/>
    </location>
</feature>
<feature type="domain" description="Obg" evidence="3">
    <location>
        <begin position="1"/>
        <end position="156"/>
    </location>
</feature>
<feature type="domain" description="OBG-type G" evidence="1">
    <location>
        <begin position="157"/>
        <end position="325"/>
    </location>
</feature>
<feature type="domain" description="OCT" evidence="2">
    <location>
        <begin position="342"/>
        <end position="419"/>
    </location>
</feature>
<feature type="binding site" evidence="1">
    <location>
        <begin position="163"/>
        <end position="170"/>
    </location>
    <ligand>
        <name>GTP</name>
        <dbReference type="ChEBI" id="CHEBI:37565"/>
    </ligand>
</feature>
<feature type="binding site" evidence="1">
    <location>
        <position position="170"/>
    </location>
    <ligand>
        <name>Mg(2+)</name>
        <dbReference type="ChEBI" id="CHEBI:18420"/>
    </ligand>
</feature>
<feature type="binding site" evidence="1">
    <location>
        <begin position="188"/>
        <end position="192"/>
    </location>
    <ligand>
        <name>GTP</name>
        <dbReference type="ChEBI" id="CHEBI:37565"/>
    </ligand>
</feature>
<feature type="binding site" evidence="1">
    <location>
        <position position="190"/>
    </location>
    <ligand>
        <name>Mg(2+)</name>
        <dbReference type="ChEBI" id="CHEBI:18420"/>
    </ligand>
</feature>
<feature type="binding site" evidence="1">
    <location>
        <begin position="209"/>
        <end position="212"/>
    </location>
    <ligand>
        <name>GTP</name>
        <dbReference type="ChEBI" id="CHEBI:37565"/>
    </ligand>
</feature>
<feature type="binding site" evidence="1">
    <location>
        <begin position="279"/>
        <end position="282"/>
    </location>
    <ligand>
        <name>GTP</name>
        <dbReference type="ChEBI" id="CHEBI:37565"/>
    </ligand>
</feature>
<feature type="binding site" evidence="1">
    <location>
        <begin position="306"/>
        <end position="308"/>
    </location>
    <ligand>
        <name>GTP</name>
        <dbReference type="ChEBI" id="CHEBI:37565"/>
    </ligand>
</feature>
<sequence>MFIDKVNTYLAAGRGGDGCISFRREKYVPYGGPDGGNGGNGGDIYFESDQHKTTLLDLSYRPKFKAEDGQKGSSGDKSGRYGEDLIIKIPLGTLIFKNGEFFADLKTVGERILIVKGGRGGRGNASFKTGRHTVPRIAEKGAPGETAEVNLELRLIADVGLLGLPNAGKSTLLSQISAAKPKIADYPFTTLAPNLGVVNYKGKHFTAADIPGIIEGAYKGIGLGFEFLRHIRRTKVLIHVIDVNGFDGRDPYENYKIINNELKKYSKHLAKKHVIIVLNKIDSAVSLEQIKNFKKHLKVKKLFETSAATGYGIDALLKEMLRMLEKPVAFSTEGEVEPLHVKKYIYEPEFKISIENGIFVATGAKVETLTEVTKFNEDESLRRYRNILKKMGLEIELKKMGARPGDTVRIGDFEFTFEK</sequence>
<dbReference type="EC" id="3.6.5.-" evidence="1"/>
<dbReference type="EMBL" id="AP009510">
    <property type="protein sequence ID" value="BAG14016.1"/>
    <property type="molecule type" value="Genomic_DNA"/>
</dbReference>
<dbReference type="RefSeq" id="WP_015423541.1">
    <property type="nucleotide sequence ID" value="NC_020419.1"/>
</dbReference>
<dbReference type="SMR" id="B1H0I4"/>
<dbReference type="STRING" id="471821.TGRD_533"/>
<dbReference type="KEGG" id="rsd:TGRD_533"/>
<dbReference type="PATRIC" id="fig|471821.5.peg.870"/>
<dbReference type="HOGENOM" id="CLU_011747_2_1_0"/>
<dbReference type="Proteomes" id="UP000001691">
    <property type="component" value="Chromosome"/>
</dbReference>
<dbReference type="GO" id="GO:0005737">
    <property type="term" value="C:cytoplasm"/>
    <property type="evidence" value="ECO:0007669"/>
    <property type="project" value="UniProtKB-SubCell"/>
</dbReference>
<dbReference type="GO" id="GO:0005525">
    <property type="term" value="F:GTP binding"/>
    <property type="evidence" value="ECO:0007669"/>
    <property type="project" value="UniProtKB-UniRule"/>
</dbReference>
<dbReference type="GO" id="GO:0003924">
    <property type="term" value="F:GTPase activity"/>
    <property type="evidence" value="ECO:0007669"/>
    <property type="project" value="UniProtKB-UniRule"/>
</dbReference>
<dbReference type="GO" id="GO:0000287">
    <property type="term" value="F:magnesium ion binding"/>
    <property type="evidence" value="ECO:0007669"/>
    <property type="project" value="InterPro"/>
</dbReference>
<dbReference type="GO" id="GO:0042254">
    <property type="term" value="P:ribosome biogenesis"/>
    <property type="evidence" value="ECO:0007669"/>
    <property type="project" value="UniProtKB-UniRule"/>
</dbReference>
<dbReference type="CDD" id="cd01898">
    <property type="entry name" value="Obg"/>
    <property type="match status" value="1"/>
</dbReference>
<dbReference type="FunFam" id="2.70.210.12:FF:000001">
    <property type="entry name" value="GTPase Obg"/>
    <property type="match status" value="1"/>
</dbReference>
<dbReference type="Gene3D" id="3.30.300.350">
    <property type="entry name" value="GTP-binding protein OBG, C-terminal domain"/>
    <property type="match status" value="1"/>
</dbReference>
<dbReference type="Gene3D" id="2.70.210.12">
    <property type="entry name" value="GTP1/OBG domain"/>
    <property type="match status" value="1"/>
</dbReference>
<dbReference type="Gene3D" id="3.40.50.300">
    <property type="entry name" value="P-loop containing nucleotide triphosphate hydrolases"/>
    <property type="match status" value="1"/>
</dbReference>
<dbReference type="HAMAP" id="MF_01454">
    <property type="entry name" value="GTPase_Obg"/>
    <property type="match status" value="1"/>
</dbReference>
<dbReference type="InterPro" id="IPR031167">
    <property type="entry name" value="G_OBG"/>
</dbReference>
<dbReference type="InterPro" id="IPR006073">
    <property type="entry name" value="GTP-bd"/>
</dbReference>
<dbReference type="InterPro" id="IPR014100">
    <property type="entry name" value="GTP-bd_Obg/CgtA"/>
</dbReference>
<dbReference type="InterPro" id="IPR036346">
    <property type="entry name" value="GTP-bd_prot_GTP1/OBG_C_sf"/>
</dbReference>
<dbReference type="InterPro" id="IPR006074">
    <property type="entry name" value="GTP1-OBG_CS"/>
</dbReference>
<dbReference type="InterPro" id="IPR006169">
    <property type="entry name" value="GTP1_OBG_dom"/>
</dbReference>
<dbReference type="InterPro" id="IPR036726">
    <property type="entry name" value="GTP1_OBG_dom_sf"/>
</dbReference>
<dbReference type="InterPro" id="IPR045086">
    <property type="entry name" value="OBG_GTPase"/>
</dbReference>
<dbReference type="InterPro" id="IPR015349">
    <property type="entry name" value="OCT_dom"/>
</dbReference>
<dbReference type="InterPro" id="IPR027417">
    <property type="entry name" value="P-loop_NTPase"/>
</dbReference>
<dbReference type="InterPro" id="IPR005225">
    <property type="entry name" value="Small_GTP-bd"/>
</dbReference>
<dbReference type="NCBIfam" id="TIGR02729">
    <property type="entry name" value="Obg_CgtA"/>
    <property type="match status" value="1"/>
</dbReference>
<dbReference type="NCBIfam" id="TIGR03595">
    <property type="entry name" value="Obg_CgtA_exten"/>
    <property type="match status" value="1"/>
</dbReference>
<dbReference type="NCBIfam" id="NF008954">
    <property type="entry name" value="PRK12296.1"/>
    <property type="match status" value="1"/>
</dbReference>
<dbReference type="NCBIfam" id="NF008955">
    <property type="entry name" value="PRK12297.1"/>
    <property type="match status" value="1"/>
</dbReference>
<dbReference type="NCBIfam" id="NF008956">
    <property type="entry name" value="PRK12299.1"/>
    <property type="match status" value="1"/>
</dbReference>
<dbReference type="NCBIfam" id="TIGR00231">
    <property type="entry name" value="small_GTP"/>
    <property type="match status" value="1"/>
</dbReference>
<dbReference type="PANTHER" id="PTHR11702">
    <property type="entry name" value="DEVELOPMENTALLY REGULATED GTP-BINDING PROTEIN-RELATED"/>
    <property type="match status" value="1"/>
</dbReference>
<dbReference type="PANTHER" id="PTHR11702:SF31">
    <property type="entry name" value="MITOCHONDRIAL RIBOSOME-ASSOCIATED GTPASE 2"/>
    <property type="match status" value="1"/>
</dbReference>
<dbReference type="Pfam" id="PF09269">
    <property type="entry name" value="DUF1967"/>
    <property type="match status" value="1"/>
</dbReference>
<dbReference type="Pfam" id="PF01018">
    <property type="entry name" value="GTP1_OBG"/>
    <property type="match status" value="1"/>
</dbReference>
<dbReference type="Pfam" id="PF01926">
    <property type="entry name" value="MMR_HSR1"/>
    <property type="match status" value="1"/>
</dbReference>
<dbReference type="PRINTS" id="PR00326">
    <property type="entry name" value="GTP1OBG"/>
</dbReference>
<dbReference type="SUPFAM" id="SSF102741">
    <property type="entry name" value="Obg GTP-binding protein C-terminal domain"/>
    <property type="match status" value="1"/>
</dbReference>
<dbReference type="SUPFAM" id="SSF82051">
    <property type="entry name" value="Obg GTP-binding protein N-terminal domain"/>
    <property type="match status" value="1"/>
</dbReference>
<dbReference type="SUPFAM" id="SSF52540">
    <property type="entry name" value="P-loop containing nucleoside triphosphate hydrolases"/>
    <property type="match status" value="1"/>
</dbReference>
<dbReference type="PROSITE" id="PS51710">
    <property type="entry name" value="G_OBG"/>
    <property type="match status" value="1"/>
</dbReference>
<dbReference type="PROSITE" id="PS00905">
    <property type="entry name" value="GTP1_OBG"/>
    <property type="match status" value="1"/>
</dbReference>
<dbReference type="PROSITE" id="PS51883">
    <property type="entry name" value="OBG"/>
    <property type="match status" value="1"/>
</dbReference>
<dbReference type="PROSITE" id="PS51881">
    <property type="entry name" value="OCT"/>
    <property type="match status" value="1"/>
</dbReference>
<proteinExistence type="inferred from homology"/>
<comment type="function">
    <text evidence="1">An essential GTPase which binds GTP, GDP and possibly (p)ppGpp with moderate affinity, with high nucleotide exchange rates and a fairly low GTP hydrolysis rate. Plays a role in control of the cell cycle, stress response, ribosome biogenesis and in those bacteria that undergo differentiation, in morphogenesis control.</text>
</comment>
<comment type="cofactor">
    <cofactor evidence="1">
        <name>Mg(2+)</name>
        <dbReference type="ChEBI" id="CHEBI:18420"/>
    </cofactor>
</comment>
<comment type="subunit">
    <text evidence="1">Monomer.</text>
</comment>
<comment type="subcellular location">
    <subcellularLocation>
        <location evidence="1">Cytoplasm</location>
    </subcellularLocation>
</comment>
<comment type="similarity">
    <text evidence="1">Belongs to the TRAFAC class OBG-HflX-like GTPase superfamily. OBG GTPase family.</text>
</comment>
<keyword id="KW-0963">Cytoplasm</keyword>
<keyword id="KW-0342">GTP-binding</keyword>
<keyword id="KW-0378">Hydrolase</keyword>
<keyword id="KW-0460">Magnesium</keyword>
<keyword id="KW-0479">Metal-binding</keyword>
<keyword id="KW-0547">Nucleotide-binding</keyword>
<organism>
    <name type="scientific">Endomicrobium trichonymphae</name>
    <dbReference type="NCBI Taxonomy" id="1408204"/>
    <lineage>
        <taxon>Bacteria</taxon>
        <taxon>Pseudomonadati</taxon>
        <taxon>Elusimicrobiota</taxon>
        <taxon>Endomicrobiia</taxon>
        <taxon>Endomicrobiales</taxon>
        <taxon>Endomicrobiaceae</taxon>
        <taxon>Candidatus Endomicrobiellum</taxon>
    </lineage>
</organism>
<gene>
    <name evidence="1" type="primary">obg</name>
    <name type="ordered locus">TGRD_533</name>
</gene>